<evidence type="ECO:0000255" key="1">
    <source>
        <dbReference type="PROSITE-ProRule" id="PRU00238"/>
    </source>
</evidence>
<gene>
    <name type="primary">HBB</name>
</gene>
<comment type="function">
    <text>Involved in oxygen transport from the lung to the various peripheral tissues.</text>
</comment>
<comment type="subunit">
    <text>Heterotetramer of two alpha chains and two beta chains.</text>
</comment>
<comment type="tissue specificity">
    <text>Red blood cells.</text>
</comment>
<comment type="similarity">
    <text evidence="1">Belongs to the globin family.</text>
</comment>
<dbReference type="PIR" id="B61485">
    <property type="entry name" value="B61485"/>
</dbReference>
<dbReference type="SMR" id="P41332"/>
<dbReference type="GO" id="GO:0072562">
    <property type="term" value="C:blood microparticle"/>
    <property type="evidence" value="ECO:0007669"/>
    <property type="project" value="TreeGrafter"/>
</dbReference>
<dbReference type="GO" id="GO:0031838">
    <property type="term" value="C:haptoglobin-hemoglobin complex"/>
    <property type="evidence" value="ECO:0007669"/>
    <property type="project" value="TreeGrafter"/>
</dbReference>
<dbReference type="GO" id="GO:0005833">
    <property type="term" value="C:hemoglobin complex"/>
    <property type="evidence" value="ECO:0007669"/>
    <property type="project" value="InterPro"/>
</dbReference>
<dbReference type="GO" id="GO:0031720">
    <property type="term" value="F:haptoglobin binding"/>
    <property type="evidence" value="ECO:0007669"/>
    <property type="project" value="TreeGrafter"/>
</dbReference>
<dbReference type="GO" id="GO:0020037">
    <property type="term" value="F:heme binding"/>
    <property type="evidence" value="ECO:0007669"/>
    <property type="project" value="InterPro"/>
</dbReference>
<dbReference type="GO" id="GO:0046872">
    <property type="term" value="F:metal ion binding"/>
    <property type="evidence" value="ECO:0007669"/>
    <property type="project" value="UniProtKB-KW"/>
</dbReference>
<dbReference type="GO" id="GO:0043177">
    <property type="term" value="F:organic acid binding"/>
    <property type="evidence" value="ECO:0007669"/>
    <property type="project" value="TreeGrafter"/>
</dbReference>
<dbReference type="GO" id="GO:0019825">
    <property type="term" value="F:oxygen binding"/>
    <property type="evidence" value="ECO:0007669"/>
    <property type="project" value="InterPro"/>
</dbReference>
<dbReference type="GO" id="GO:0005344">
    <property type="term" value="F:oxygen carrier activity"/>
    <property type="evidence" value="ECO:0007669"/>
    <property type="project" value="UniProtKB-KW"/>
</dbReference>
<dbReference type="GO" id="GO:0004601">
    <property type="term" value="F:peroxidase activity"/>
    <property type="evidence" value="ECO:0007669"/>
    <property type="project" value="TreeGrafter"/>
</dbReference>
<dbReference type="GO" id="GO:0042744">
    <property type="term" value="P:hydrogen peroxide catabolic process"/>
    <property type="evidence" value="ECO:0007669"/>
    <property type="project" value="TreeGrafter"/>
</dbReference>
<dbReference type="CDD" id="cd08925">
    <property type="entry name" value="Hb-beta-like"/>
    <property type="match status" value="1"/>
</dbReference>
<dbReference type="FunFam" id="1.10.490.10:FF:000001">
    <property type="entry name" value="Hemoglobin subunit beta"/>
    <property type="match status" value="1"/>
</dbReference>
<dbReference type="Gene3D" id="1.10.490.10">
    <property type="entry name" value="Globins"/>
    <property type="match status" value="1"/>
</dbReference>
<dbReference type="InterPro" id="IPR000971">
    <property type="entry name" value="Globin"/>
</dbReference>
<dbReference type="InterPro" id="IPR009050">
    <property type="entry name" value="Globin-like_sf"/>
</dbReference>
<dbReference type="InterPro" id="IPR012292">
    <property type="entry name" value="Globin/Proto"/>
</dbReference>
<dbReference type="InterPro" id="IPR002337">
    <property type="entry name" value="Hemoglobin_b"/>
</dbReference>
<dbReference type="InterPro" id="IPR050056">
    <property type="entry name" value="Hemoglobin_oxygen_transport"/>
</dbReference>
<dbReference type="PANTHER" id="PTHR11442">
    <property type="entry name" value="HEMOGLOBIN FAMILY MEMBER"/>
    <property type="match status" value="1"/>
</dbReference>
<dbReference type="PANTHER" id="PTHR11442:SF7">
    <property type="entry name" value="HEMOGLOBIN SUBUNIT EPSILON"/>
    <property type="match status" value="1"/>
</dbReference>
<dbReference type="Pfam" id="PF00042">
    <property type="entry name" value="Globin"/>
    <property type="match status" value="1"/>
</dbReference>
<dbReference type="PRINTS" id="PR00814">
    <property type="entry name" value="BETAHAEM"/>
</dbReference>
<dbReference type="SUPFAM" id="SSF46458">
    <property type="entry name" value="Globin-like"/>
    <property type="match status" value="1"/>
</dbReference>
<dbReference type="PROSITE" id="PS01033">
    <property type="entry name" value="GLOBIN"/>
    <property type="match status" value="1"/>
</dbReference>
<proteinExistence type="evidence at protein level"/>
<organism>
    <name type="scientific">Microcephalophis gracilis</name>
    <name type="common">Graceful small-headed sea snake</name>
    <name type="synonym">Hydrus gracilis</name>
    <dbReference type="NCBI Taxonomy" id="31162"/>
    <lineage>
        <taxon>Eukaryota</taxon>
        <taxon>Metazoa</taxon>
        <taxon>Chordata</taxon>
        <taxon>Craniata</taxon>
        <taxon>Vertebrata</taxon>
        <taxon>Euteleostomi</taxon>
        <taxon>Lepidosauria</taxon>
        <taxon>Squamata</taxon>
        <taxon>Bifurcata</taxon>
        <taxon>Unidentata</taxon>
        <taxon>Episquamata</taxon>
        <taxon>Toxicofera</taxon>
        <taxon>Serpentes</taxon>
        <taxon>Colubroidea</taxon>
        <taxon>Elapidae</taxon>
        <taxon>Hydrophiinae</taxon>
        <taxon>Microcephalophis</taxon>
    </lineage>
</organism>
<accession>P41332</accession>
<reference key="1">
    <citation type="journal article" date="1990" name="J. Protein Chem.">
        <title>Sea snake (Microcephalophis gracilis) hemoglobin: primary structure and relationships to other forms.</title>
        <authorList>
            <person name="Islam A."/>
            <person name="Persson B."/>
            <person name="Zaidi Z.H."/>
            <person name="Joernvall H."/>
        </authorList>
    </citation>
    <scope>PROTEIN SEQUENCE</scope>
</reference>
<feature type="chain" id="PRO_0000053020" description="Hemoglobin subunit beta">
    <location>
        <begin position="1"/>
        <end position="146"/>
    </location>
</feature>
<feature type="domain" description="Globin" evidence="1">
    <location>
        <begin position="2"/>
        <end position="146"/>
    </location>
</feature>
<feature type="binding site" description="distal binding residue">
    <location>
        <position position="63"/>
    </location>
    <ligand>
        <name>heme b</name>
        <dbReference type="ChEBI" id="CHEBI:60344"/>
    </ligand>
    <ligandPart>
        <name>Fe</name>
        <dbReference type="ChEBI" id="CHEBI:18248"/>
    </ligandPart>
</feature>
<feature type="binding site" description="proximal binding residue">
    <location>
        <position position="92"/>
    </location>
    <ligand>
        <name>heme b</name>
        <dbReference type="ChEBI" id="CHEBI:60344"/>
    </ligand>
    <ligandPart>
        <name>Fe</name>
        <dbReference type="ChEBI" id="CHEBI:18248"/>
    </ligandPart>
</feature>
<keyword id="KW-0903">Direct protein sequencing</keyword>
<keyword id="KW-0349">Heme</keyword>
<keyword id="KW-0408">Iron</keyword>
<keyword id="KW-0479">Metal-binding</keyword>
<keyword id="KW-0561">Oxygen transport</keyword>
<keyword id="KW-0813">Transport</keyword>
<name>HBB_MICGB</name>
<protein>
    <recommendedName>
        <fullName>Hemoglobin subunit beta</fullName>
    </recommendedName>
    <alternativeName>
        <fullName>Beta-globin</fullName>
    </alternativeName>
    <alternativeName>
        <fullName>Hemoglobin beta chain</fullName>
    </alternativeName>
</protein>
<sequence>VHWSAEEKQLITGLWGKVDVAEVGGATLGKLLVVFPWTQRFFAHFGNLSSANAIICNPVVKAHGKKVLTSFGEAIKHLDSIKETFAKLSELHCEKLHVDPENFRLLGNILIIVLAGHHGKEFTPSTHAAFQKLVRAVAHSLARVYH</sequence>